<comment type="catalytic activity">
    <reaction evidence="1">
        <text>tRNA(Gly) + glycine + ATP = glycyl-tRNA(Gly) + AMP + diphosphate</text>
        <dbReference type="Rhea" id="RHEA:16013"/>
        <dbReference type="Rhea" id="RHEA-COMP:9664"/>
        <dbReference type="Rhea" id="RHEA-COMP:9683"/>
        <dbReference type="ChEBI" id="CHEBI:30616"/>
        <dbReference type="ChEBI" id="CHEBI:33019"/>
        <dbReference type="ChEBI" id="CHEBI:57305"/>
        <dbReference type="ChEBI" id="CHEBI:78442"/>
        <dbReference type="ChEBI" id="CHEBI:78522"/>
        <dbReference type="ChEBI" id="CHEBI:456215"/>
        <dbReference type="EC" id="6.1.1.14"/>
    </reaction>
</comment>
<comment type="subunit">
    <text evidence="1">Tetramer of two alpha and two beta subunits.</text>
</comment>
<comment type="subcellular location">
    <subcellularLocation>
        <location evidence="1">Cytoplasm</location>
    </subcellularLocation>
</comment>
<comment type="similarity">
    <text evidence="1">Belongs to the class-II aminoacyl-tRNA synthetase family.</text>
</comment>
<dbReference type="EC" id="6.1.1.14" evidence="1"/>
<dbReference type="EMBL" id="CP000828">
    <property type="protein sequence ID" value="ABW28159.1"/>
    <property type="molecule type" value="Genomic_DNA"/>
</dbReference>
<dbReference type="RefSeq" id="WP_012163582.1">
    <property type="nucleotide sequence ID" value="NC_009925.1"/>
</dbReference>
<dbReference type="SMR" id="B0CEQ4"/>
<dbReference type="STRING" id="329726.AM1_3163"/>
<dbReference type="KEGG" id="amr:AM1_3163"/>
<dbReference type="eggNOG" id="COG0752">
    <property type="taxonomic scope" value="Bacteria"/>
</dbReference>
<dbReference type="HOGENOM" id="CLU_057066_1_0_3"/>
<dbReference type="OrthoDB" id="9802183at2"/>
<dbReference type="Proteomes" id="UP000000268">
    <property type="component" value="Chromosome"/>
</dbReference>
<dbReference type="GO" id="GO:0005829">
    <property type="term" value="C:cytosol"/>
    <property type="evidence" value="ECO:0007669"/>
    <property type="project" value="TreeGrafter"/>
</dbReference>
<dbReference type="GO" id="GO:0005524">
    <property type="term" value="F:ATP binding"/>
    <property type="evidence" value="ECO:0007669"/>
    <property type="project" value="UniProtKB-UniRule"/>
</dbReference>
<dbReference type="GO" id="GO:0004820">
    <property type="term" value="F:glycine-tRNA ligase activity"/>
    <property type="evidence" value="ECO:0007669"/>
    <property type="project" value="UniProtKB-UniRule"/>
</dbReference>
<dbReference type="GO" id="GO:0006426">
    <property type="term" value="P:glycyl-tRNA aminoacylation"/>
    <property type="evidence" value="ECO:0007669"/>
    <property type="project" value="UniProtKB-UniRule"/>
</dbReference>
<dbReference type="CDD" id="cd00733">
    <property type="entry name" value="GlyRS_alpha_core"/>
    <property type="match status" value="1"/>
</dbReference>
<dbReference type="FunFam" id="3.30.930.10:FF:000006">
    <property type="entry name" value="Glycine--tRNA ligase alpha subunit"/>
    <property type="match status" value="1"/>
</dbReference>
<dbReference type="Gene3D" id="3.30.930.10">
    <property type="entry name" value="Bira Bifunctional Protein, Domain 2"/>
    <property type="match status" value="1"/>
</dbReference>
<dbReference type="Gene3D" id="1.20.58.180">
    <property type="entry name" value="Class II aaRS and biotin synthetases, domain 2"/>
    <property type="match status" value="1"/>
</dbReference>
<dbReference type="HAMAP" id="MF_00254">
    <property type="entry name" value="Gly_tRNA_synth_alpha"/>
    <property type="match status" value="1"/>
</dbReference>
<dbReference type="InterPro" id="IPR045864">
    <property type="entry name" value="aa-tRNA-synth_II/BPL/LPL"/>
</dbReference>
<dbReference type="InterPro" id="IPR006194">
    <property type="entry name" value="Gly-tRNA-synth_heterodimer"/>
</dbReference>
<dbReference type="InterPro" id="IPR002310">
    <property type="entry name" value="Gly-tRNA_ligase_asu"/>
</dbReference>
<dbReference type="NCBIfam" id="TIGR00388">
    <property type="entry name" value="glyQ"/>
    <property type="match status" value="1"/>
</dbReference>
<dbReference type="NCBIfam" id="NF006827">
    <property type="entry name" value="PRK09348.1"/>
    <property type="match status" value="1"/>
</dbReference>
<dbReference type="PANTHER" id="PTHR30075:SF2">
    <property type="entry name" value="GLYCINE--TRNA LIGASE, CHLOROPLASTIC_MITOCHONDRIAL 2"/>
    <property type="match status" value="1"/>
</dbReference>
<dbReference type="PANTHER" id="PTHR30075">
    <property type="entry name" value="GLYCYL-TRNA SYNTHETASE"/>
    <property type="match status" value="1"/>
</dbReference>
<dbReference type="Pfam" id="PF02091">
    <property type="entry name" value="tRNA-synt_2e"/>
    <property type="match status" value="1"/>
</dbReference>
<dbReference type="PRINTS" id="PR01044">
    <property type="entry name" value="TRNASYNTHGA"/>
</dbReference>
<dbReference type="SUPFAM" id="SSF55681">
    <property type="entry name" value="Class II aaRS and biotin synthetases"/>
    <property type="match status" value="1"/>
</dbReference>
<dbReference type="PROSITE" id="PS50861">
    <property type="entry name" value="AA_TRNA_LIGASE_II_GLYAB"/>
    <property type="match status" value="1"/>
</dbReference>
<sequence length="293" mass="33858">MNFQSVIAKLHEFWSDRGCLIVQPYDIEKGAGTKSPHTFLRSLGPEPWAVAYVEPCRRPADGRYGENPNRYQYYYQYQVLVKPSPDDIQDIYLDSLRVLGIQPEDHDIRFVEDNWEDAAVGAWGVGWEVWLDGMEVTQFTYFQQCGGLDCRPVSIELTYGLERLTMYLQETDAIAKIDWNGTLTYGDVHLQGEIEQSTYNFEASNPELLFQLFSLYEQEALQLIEKQLVLPGLDYVLKCSHTFNLLDARGVISVTERTRYIGRIRQMARQVAQLYLQQREELGFPLLKTQSVS</sequence>
<gene>
    <name evidence="1" type="primary">glyQ</name>
    <name type="ordered locus">AM1_3163</name>
</gene>
<name>SYGA_ACAM1</name>
<protein>
    <recommendedName>
        <fullName evidence="1">Glycine--tRNA ligase alpha subunit</fullName>
        <ecNumber evidence="1">6.1.1.14</ecNumber>
    </recommendedName>
    <alternativeName>
        <fullName evidence="1">Glycyl-tRNA synthetase alpha subunit</fullName>
        <shortName evidence="1">GlyRS</shortName>
    </alternativeName>
</protein>
<accession>B0CEQ4</accession>
<evidence type="ECO:0000255" key="1">
    <source>
        <dbReference type="HAMAP-Rule" id="MF_00254"/>
    </source>
</evidence>
<feature type="chain" id="PRO_1000078520" description="Glycine--tRNA ligase alpha subunit">
    <location>
        <begin position="1"/>
        <end position="293"/>
    </location>
</feature>
<proteinExistence type="inferred from homology"/>
<organism>
    <name type="scientific">Acaryochloris marina (strain MBIC 11017)</name>
    <dbReference type="NCBI Taxonomy" id="329726"/>
    <lineage>
        <taxon>Bacteria</taxon>
        <taxon>Bacillati</taxon>
        <taxon>Cyanobacteriota</taxon>
        <taxon>Cyanophyceae</taxon>
        <taxon>Acaryochloridales</taxon>
        <taxon>Acaryochloridaceae</taxon>
        <taxon>Acaryochloris</taxon>
    </lineage>
</organism>
<reference key="1">
    <citation type="journal article" date="2008" name="Proc. Natl. Acad. Sci. U.S.A.">
        <title>Niche adaptation and genome expansion in the chlorophyll d-producing cyanobacterium Acaryochloris marina.</title>
        <authorList>
            <person name="Swingley W.D."/>
            <person name="Chen M."/>
            <person name="Cheung P.C."/>
            <person name="Conrad A.L."/>
            <person name="Dejesa L.C."/>
            <person name="Hao J."/>
            <person name="Honchak B.M."/>
            <person name="Karbach L.E."/>
            <person name="Kurdoglu A."/>
            <person name="Lahiri S."/>
            <person name="Mastrian S.D."/>
            <person name="Miyashita H."/>
            <person name="Page L."/>
            <person name="Ramakrishna P."/>
            <person name="Satoh S."/>
            <person name="Sattley W.M."/>
            <person name="Shimada Y."/>
            <person name="Taylor H.L."/>
            <person name="Tomo T."/>
            <person name="Tsuchiya T."/>
            <person name="Wang Z.T."/>
            <person name="Raymond J."/>
            <person name="Mimuro M."/>
            <person name="Blankenship R.E."/>
            <person name="Touchman J.W."/>
        </authorList>
    </citation>
    <scope>NUCLEOTIDE SEQUENCE [LARGE SCALE GENOMIC DNA]</scope>
    <source>
        <strain>MBIC 11017</strain>
    </source>
</reference>
<keyword id="KW-0030">Aminoacyl-tRNA synthetase</keyword>
<keyword id="KW-0067">ATP-binding</keyword>
<keyword id="KW-0963">Cytoplasm</keyword>
<keyword id="KW-0436">Ligase</keyword>
<keyword id="KW-0547">Nucleotide-binding</keyword>
<keyword id="KW-0648">Protein biosynthesis</keyword>
<keyword id="KW-1185">Reference proteome</keyword>